<evidence type="ECO:0000255" key="1">
    <source>
        <dbReference type="HAMAP-Rule" id="MF_01333"/>
    </source>
</evidence>
<evidence type="ECO:0000305" key="2"/>
<dbReference type="EMBL" id="CP000828">
    <property type="protein sequence ID" value="ABW29680.1"/>
    <property type="molecule type" value="Genomic_DNA"/>
</dbReference>
<dbReference type="RefSeq" id="WP_010469306.1">
    <property type="nucleotide sequence ID" value="NC_009925.1"/>
</dbReference>
<dbReference type="SMR" id="B0C1E5"/>
<dbReference type="STRING" id="329726.AM1_4708"/>
<dbReference type="KEGG" id="amr:AM1_4708"/>
<dbReference type="eggNOG" id="COG0094">
    <property type="taxonomic scope" value="Bacteria"/>
</dbReference>
<dbReference type="HOGENOM" id="CLU_061015_2_1_3"/>
<dbReference type="OrthoDB" id="9806626at2"/>
<dbReference type="Proteomes" id="UP000000268">
    <property type="component" value="Chromosome"/>
</dbReference>
<dbReference type="GO" id="GO:1990904">
    <property type="term" value="C:ribonucleoprotein complex"/>
    <property type="evidence" value="ECO:0007669"/>
    <property type="project" value="UniProtKB-KW"/>
</dbReference>
<dbReference type="GO" id="GO:0005840">
    <property type="term" value="C:ribosome"/>
    <property type="evidence" value="ECO:0007669"/>
    <property type="project" value="UniProtKB-KW"/>
</dbReference>
<dbReference type="GO" id="GO:0019843">
    <property type="term" value="F:rRNA binding"/>
    <property type="evidence" value="ECO:0007669"/>
    <property type="project" value="UniProtKB-UniRule"/>
</dbReference>
<dbReference type="GO" id="GO:0003735">
    <property type="term" value="F:structural constituent of ribosome"/>
    <property type="evidence" value="ECO:0007669"/>
    <property type="project" value="InterPro"/>
</dbReference>
<dbReference type="GO" id="GO:0000049">
    <property type="term" value="F:tRNA binding"/>
    <property type="evidence" value="ECO:0007669"/>
    <property type="project" value="UniProtKB-UniRule"/>
</dbReference>
<dbReference type="GO" id="GO:0006412">
    <property type="term" value="P:translation"/>
    <property type="evidence" value="ECO:0007669"/>
    <property type="project" value="UniProtKB-UniRule"/>
</dbReference>
<dbReference type="FunFam" id="3.30.1440.10:FF:000001">
    <property type="entry name" value="50S ribosomal protein L5"/>
    <property type="match status" value="1"/>
</dbReference>
<dbReference type="Gene3D" id="3.30.1440.10">
    <property type="match status" value="1"/>
</dbReference>
<dbReference type="HAMAP" id="MF_01333_B">
    <property type="entry name" value="Ribosomal_uL5_B"/>
    <property type="match status" value="1"/>
</dbReference>
<dbReference type="InterPro" id="IPR002132">
    <property type="entry name" value="Ribosomal_uL5"/>
</dbReference>
<dbReference type="InterPro" id="IPR020930">
    <property type="entry name" value="Ribosomal_uL5_bac-type"/>
</dbReference>
<dbReference type="InterPro" id="IPR031309">
    <property type="entry name" value="Ribosomal_uL5_C"/>
</dbReference>
<dbReference type="InterPro" id="IPR020929">
    <property type="entry name" value="Ribosomal_uL5_CS"/>
</dbReference>
<dbReference type="InterPro" id="IPR022803">
    <property type="entry name" value="Ribosomal_uL5_dom_sf"/>
</dbReference>
<dbReference type="InterPro" id="IPR031310">
    <property type="entry name" value="Ribosomal_uL5_N"/>
</dbReference>
<dbReference type="NCBIfam" id="NF000585">
    <property type="entry name" value="PRK00010.1"/>
    <property type="match status" value="1"/>
</dbReference>
<dbReference type="PANTHER" id="PTHR11994">
    <property type="entry name" value="60S RIBOSOMAL PROTEIN L11-RELATED"/>
    <property type="match status" value="1"/>
</dbReference>
<dbReference type="Pfam" id="PF00281">
    <property type="entry name" value="Ribosomal_L5"/>
    <property type="match status" value="1"/>
</dbReference>
<dbReference type="Pfam" id="PF00673">
    <property type="entry name" value="Ribosomal_L5_C"/>
    <property type="match status" value="1"/>
</dbReference>
<dbReference type="PIRSF" id="PIRSF002161">
    <property type="entry name" value="Ribosomal_L5"/>
    <property type="match status" value="1"/>
</dbReference>
<dbReference type="SUPFAM" id="SSF55282">
    <property type="entry name" value="RL5-like"/>
    <property type="match status" value="1"/>
</dbReference>
<dbReference type="PROSITE" id="PS00358">
    <property type="entry name" value="RIBOSOMAL_L5"/>
    <property type="match status" value="1"/>
</dbReference>
<organism>
    <name type="scientific">Acaryochloris marina (strain MBIC 11017)</name>
    <dbReference type="NCBI Taxonomy" id="329726"/>
    <lineage>
        <taxon>Bacteria</taxon>
        <taxon>Bacillati</taxon>
        <taxon>Cyanobacteriota</taxon>
        <taxon>Cyanophyceae</taxon>
        <taxon>Acaryochloridales</taxon>
        <taxon>Acaryochloridaceae</taxon>
        <taxon>Acaryochloris</taxon>
    </lineage>
</organism>
<protein>
    <recommendedName>
        <fullName evidence="1">Large ribosomal subunit protein uL5</fullName>
    </recommendedName>
    <alternativeName>
        <fullName evidence="2">50S ribosomal protein L5</fullName>
    </alternativeName>
</protein>
<reference key="1">
    <citation type="journal article" date="2008" name="Proc. Natl. Acad. Sci. U.S.A.">
        <title>Niche adaptation and genome expansion in the chlorophyll d-producing cyanobacterium Acaryochloris marina.</title>
        <authorList>
            <person name="Swingley W.D."/>
            <person name="Chen M."/>
            <person name="Cheung P.C."/>
            <person name="Conrad A.L."/>
            <person name="Dejesa L.C."/>
            <person name="Hao J."/>
            <person name="Honchak B.M."/>
            <person name="Karbach L.E."/>
            <person name="Kurdoglu A."/>
            <person name="Lahiri S."/>
            <person name="Mastrian S.D."/>
            <person name="Miyashita H."/>
            <person name="Page L."/>
            <person name="Ramakrishna P."/>
            <person name="Satoh S."/>
            <person name="Sattley W.M."/>
            <person name="Shimada Y."/>
            <person name="Taylor H.L."/>
            <person name="Tomo T."/>
            <person name="Tsuchiya T."/>
            <person name="Wang Z.T."/>
            <person name="Raymond J."/>
            <person name="Mimuro M."/>
            <person name="Blankenship R.E."/>
            <person name="Touchman J.W."/>
        </authorList>
    </citation>
    <scope>NUCLEOTIDE SEQUENCE [LARGE SCALE GENOMIC DNA]</scope>
    <source>
        <strain>MBIC 11017</strain>
    </source>
</reference>
<comment type="function">
    <text evidence="1">This is one of the proteins that bind and probably mediate the attachment of the 5S RNA into the large ribosomal subunit, where it forms part of the central protuberance. In the 70S ribosome it contacts protein S13 of the 30S subunit (bridge B1b), connecting the 2 subunits; this bridge is implicated in subunit movement. Contacts the P site tRNA; the 5S rRNA and some of its associated proteins might help stabilize positioning of ribosome-bound tRNAs.</text>
</comment>
<comment type="subunit">
    <text evidence="1">Part of the 50S ribosomal subunit; part of the 5S rRNA/L5/L18/L25 subcomplex. Contacts the 5S rRNA and the P site tRNA. Forms a bridge to the 30S subunit in the 70S ribosome.</text>
</comment>
<comment type="similarity">
    <text evidence="1">Belongs to the universal ribosomal protein uL5 family.</text>
</comment>
<feature type="chain" id="PRO_1000086577" description="Large ribosomal subunit protein uL5">
    <location>
        <begin position="1"/>
        <end position="181"/>
    </location>
</feature>
<gene>
    <name evidence="1" type="primary">rplE</name>
    <name evidence="1" type="synonym">rpl5</name>
    <name type="ordered locus">AM1_4708</name>
</gene>
<keyword id="KW-1185">Reference proteome</keyword>
<keyword id="KW-0687">Ribonucleoprotein</keyword>
<keyword id="KW-0689">Ribosomal protein</keyword>
<keyword id="KW-0694">RNA-binding</keyword>
<keyword id="KW-0699">rRNA-binding</keyword>
<keyword id="KW-0820">tRNA-binding</keyword>
<proteinExistence type="inferred from homology"/>
<sequence length="181" mass="20380">MTVRLKTLYLDTAVPKLQEQFKYKNAHEIPKVTKVSVNRGLGEASQNAKALERSLEELAVITGQRPVVTRAKKAIAGFKIRQGMPVGVMVTLRGERMYAFLDRLVNLALPRIRDFRGVSPKSFDGRGNYTLGLREQLIFPEVDYDSIDQIRGMDISIITTAKTDEEGRALLKVLGMPFREN</sequence>
<accession>B0C1E5</accession>
<name>RL5_ACAM1</name>